<protein>
    <recommendedName>
        <fullName>Nucleolar and spindle-associated protein 1</fullName>
        <shortName>NuSAP</shortName>
    </recommendedName>
</protein>
<reference key="1">
    <citation type="submission" date="2000-07" db="EMBL/GenBank/DDBJ databases">
        <title>Homo sapiens liver nuclear protein mRNA.</title>
        <authorList>
            <person name="Qu X."/>
            <person name="Zhang C."/>
            <person name="Yu Y."/>
            <person name="Wu S."/>
            <person name="Wei H."/>
            <person name="Xing G."/>
            <person name="Zhai Y."/>
            <person name="Lu C."/>
            <person name="Wang M."/>
            <person name="He F."/>
        </authorList>
    </citation>
    <scope>NUCLEOTIDE SEQUENCE [MRNA] (ISOFORM 1)</scope>
    <source>
        <tissue>Fetal liver</tissue>
    </source>
</reference>
<reference key="2">
    <citation type="submission" date="2000-10" db="EMBL/GenBank/DDBJ databases">
        <title>A novel nucleolar protein expressed in proliferating cells.</title>
        <authorList>
            <person name="Sato H."/>
            <person name="Tanaka Y."/>
            <person name="Taniguchi M."/>
        </authorList>
    </citation>
    <scope>NUCLEOTIDE SEQUENCE [MRNA] (ISOFORM 2)</scope>
    <source>
        <tissue>Peripheral blood</tissue>
    </source>
</reference>
<reference key="3">
    <citation type="journal article" date="2001" name="Genome Res.">
        <title>Gene expression profiling in human fetal liver and identification of tissue- and developmental-stage-specific genes through compiled expression profiles and efficient cloning of full-length cDNAs.</title>
        <authorList>
            <person name="Yu Y."/>
            <person name="Zhang C."/>
            <person name="Zhou G."/>
            <person name="Wu S."/>
            <person name="Qu X."/>
            <person name="Wei H."/>
            <person name="Xing G."/>
            <person name="Dong C."/>
            <person name="Zhai Y."/>
            <person name="Wan J."/>
            <person name="Ouyang S."/>
            <person name="Li L."/>
            <person name="Zhang S."/>
            <person name="Zhou K."/>
            <person name="Zhang Y."/>
            <person name="Wu C."/>
            <person name="He F."/>
        </authorList>
    </citation>
    <scope>NUCLEOTIDE SEQUENCE [LARGE SCALE MRNA] (ISOFORM 1)</scope>
    <source>
        <tissue>Fetal liver</tissue>
    </source>
</reference>
<reference key="4">
    <citation type="journal article" date="2004" name="Nat. Genet.">
        <title>Complete sequencing and characterization of 21,243 full-length human cDNAs.</title>
        <authorList>
            <person name="Ota T."/>
            <person name="Suzuki Y."/>
            <person name="Nishikawa T."/>
            <person name="Otsuki T."/>
            <person name="Sugiyama T."/>
            <person name="Irie R."/>
            <person name="Wakamatsu A."/>
            <person name="Hayashi K."/>
            <person name="Sato H."/>
            <person name="Nagai K."/>
            <person name="Kimura K."/>
            <person name="Makita H."/>
            <person name="Sekine M."/>
            <person name="Obayashi M."/>
            <person name="Nishi T."/>
            <person name="Shibahara T."/>
            <person name="Tanaka T."/>
            <person name="Ishii S."/>
            <person name="Yamamoto J."/>
            <person name="Saito K."/>
            <person name="Kawai Y."/>
            <person name="Isono Y."/>
            <person name="Nakamura Y."/>
            <person name="Nagahari K."/>
            <person name="Murakami K."/>
            <person name="Yasuda T."/>
            <person name="Iwayanagi T."/>
            <person name="Wagatsuma M."/>
            <person name="Shiratori A."/>
            <person name="Sudo H."/>
            <person name="Hosoiri T."/>
            <person name="Kaku Y."/>
            <person name="Kodaira H."/>
            <person name="Kondo H."/>
            <person name="Sugawara M."/>
            <person name="Takahashi M."/>
            <person name="Kanda K."/>
            <person name="Yokoi T."/>
            <person name="Furuya T."/>
            <person name="Kikkawa E."/>
            <person name="Omura Y."/>
            <person name="Abe K."/>
            <person name="Kamihara K."/>
            <person name="Katsuta N."/>
            <person name="Sato K."/>
            <person name="Tanikawa M."/>
            <person name="Yamazaki M."/>
            <person name="Ninomiya K."/>
            <person name="Ishibashi T."/>
            <person name="Yamashita H."/>
            <person name="Murakawa K."/>
            <person name="Fujimori K."/>
            <person name="Tanai H."/>
            <person name="Kimata M."/>
            <person name="Watanabe M."/>
            <person name="Hiraoka S."/>
            <person name="Chiba Y."/>
            <person name="Ishida S."/>
            <person name="Ono Y."/>
            <person name="Takiguchi S."/>
            <person name="Watanabe S."/>
            <person name="Yosida M."/>
            <person name="Hotuta T."/>
            <person name="Kusano J."/>
            <person name="Kanehori K."/>
            <person name="Takahashi-Fujii A."/>
            <person name="Hara H."/>
            <person name="Tanase T.-O."/>
            <person name="Nomura Y."/>
            <person name="Togiya S."/>
            <person name="Komai F."/>
            <person name="Hara R."/>
            <person name="Takeuchi K."/>
            <person name="Arita M."/>
            <person name="Imose N."/>
            <person name="Musashino K."/>
            <person name="Yuuki H."/>
            <person name="Oshima A."/>
            <person name="Sasaki N."/>
            <person name="Aotsuka S."/>
            <person name="Yoshikawa Y."/>
            <person name="Matsunawa H."/>
            <person name="Ichihara T."/>
            <person name="Shiohata N."/>
            <person name="Sano S."/>
            <person name="Moriya S."/>
            <person name="Momiyama H."/>
            <person name="Satoh N."/>
            <person name="Takami S."/>
            <person name="Terashima Y."/>
            <person name="Suzuki O."/>
            <person name="Nakagawa S."/>
            <person name="Senoh A."/>
            <person name="Mizoguchi H."/>
            <person name="Goto Y."/>
            <person name="Shimizu F."/>
            <person name="Wakebe H."/>
            <person name="Hishigaki H."/>
            <person name="Watanabe T."/>
            <person name="Sugiyama A."/>
            <person name="Takemoto M."/>
            <person name="Kawakami B."/>
            <person name="Yamazaki M."/>
            <person name="Watanabe K."/>
            <person name="Kumagai A."/>
            <person name="Itakura S."/>
            <person name="Fukuzumi Y."/>
            <person name="Fujimori Y."/>
            <person name="Komiyama M."/>
            <person name="Tashiro H."/>
            <person name="Tanigami A."/>
            <person name="Fujiwara T."/>
            <person name="Ono T."/>
            <person name="Yamada K."/>
            <person name="Fujii Y."/>
            <person name="Ozaki K."/>
            <person name="Hirao M."/>
            <person name="Ohmori Y."/>
            <person name="Kawabata A."/>
            <person name="Hikiji T."/>
            <person name="Kobatake N."/>
            <person name="Inagaki H."/>
            <person name="Ikema Y."/>
            <person name="Okamoto S."/>
            <person name="Okitani R."/>
            <person name="Kawakami T."/>
            <person name="Noguchi S."/>
            <person name="Itoh T."/>
            <person name="Shigeta K."/>
            <person name="Senba T."/>
            <person name="Matsumura K."/>
            <person name="Nakajima Y."/>
            <person name="Mizuno T."/>
            <person name="Morinaga M."/>
            <person name="Sasaki M."/>
            <person name="Togashi T."/>
            <person name="Oyama M."/>
            <person name="Hata H."/>
            <person name="Watanabe M."/>
            <person name="Komatsu T."/>
            <person name="Mizushima-Sugano J."/>
            <person name="Satoh T."/>
            <person name="Shirai Y."/>
            <person name="Takahashi Y."/>
            <person name="Nakagawa K."/>
            <person name="Okumura K."/>
            <person name="Nagase T."/>
            <person name="Nomura N."/>
            <person name="Kikuchi H."/>
            <person name="Masuho Y."/>
            <person name="Yamashita R."/>
            <person name="Nakai K."/>
            <person name="Yada T."/>
            <person name="Nakamura Y."/>
            <person name="Ohara O."/>
            <person name="Isogai T."/>
            <person name="Sugano S."/>
        </authorList>
    </citation>
    <scope>NUCLEOTIDE SEQUENCE [LARGE SCALE MRNA] (ISOFORMS 2 AND 7)</scope>
    <source>
        <tissue>Neuroblastoma</tissue>
        <tissue>Placenta</tissue>
    </source>
</reference>
<reference key="5">
    <citation type="submission" date="2005-04" db="EMBL/GenBank/DDBJ databases">
        <authorList>
            <person name="Suzuki Y."/>
            <person name="Sugano S."/>
            <person name="Totoki Y."/>
            <person name="Toyoda A."/>
            <person name="Takeda T."/>
            <person name="Sakaki Y."/>
            <person name="Tanaka A."/>
            <person name="Yokoyama S."/>
        </authorList>
    </citation>
    <scope>NUCLEOTIDE SEQUENCE [LARGE SCALE MRNA] (ISOFORM 2)</scope>
    <source>
        <tissue>Liver</tissue>
    </source>
</reference>
<reference key="6">
    <citation type="journal article" date="2007" name="BMC Genomics">
        <title>The full-ORF clone resource of the German cDNA consortium.</title>
        <authorList>
            <person name="Bechtel S."/>
            <person name="Rosenfelder H."/>
            <person name="Duda A."/>
            <person name="Schmidt C.P."/>
            <person name="Ernst U."/>
            <person name="Wellenreuther R."/>
            <person name="Mehrle A."/>
            <person name="Schuster C."/>
            <person name="Bahr A."/>
            <person name="Bloecker H."/>
            <person name="Heubner D."/>
            <person name="Hoerlein A."/>
            <person name="Michel G."/>
            <person name="Wedler H."/>
            <person name="Koehrer K."/>
            <person name="Ottenwaelder B."/>
            <person name="Poustka A."/>
            <person name="Wiemann S."/>
            <person name="Schupp I."/>
        </authorList>
    </citation>
    <scope>NUCLEOTIDE SEQUENCE [LARGE SCALE MRNA] (ISOFORM 6)</scope>
</reference>
<reference key="7">
    <citation type="journal article" date="2006" name="Nature">
        <title>Analysis of the DNA sequence and duplication history of human chromosome 15.</title>
        <authorList>
            <person name="Zody M.C."/>
            <person name="Garber M."/>
            <person name="Sharpe T."/>
            <person name="Young S.K."/>
            <person name="Rowen L."/>
            <person name="O'Neill K."/>
            <person name="Whittaker C.A."/>
            <person name="Kamal M."/>
            <person name="Chang J.L."/>
            <person name="Cuomo C.A."/>
            <person name="Dewar K."/>
            <person name="FitzGerald M.G."/>
            <person name="Kodira C.D."/>
            <person name="Madan A."/>
            <person name="Qin S."/>
            <person name="Yang X."/>
            <person name="Abbasi N."/>
            <person name="Abouelleil A."/>
            <person name="Arachchi H.M."/>
            <person name="Baradarani L."/>
            <person name="Birditt B."/>
            <person name="Bloom S."/>
            <person name="Bloom T."/>
            <person name="Borowsky M.L."/>
            <person name="Burke J."/>
            <person name="Butler J."/>
            <person name="Cook A."/>
            <person name="DeArellano K."/>
            <person name="DeCaprio D."/>
            <person name="Dorris L. III"/>
            <person name="Dors M."/>
            <person name="Eichler E.E."/>
            <person name="Engels R."/>
            <person name="Fahey J."/>
            <person name="Fleetwood P."/>
            <person name="Friedman C."/>
            <person name="Gearin G."/>
            <person name="Hall J.L."/>
            <person name="Hensley G."/>
            <person name="Johnson E."/>
            <person name="Jones C."/>
            <person name="Kamat A."/>
            <person name="Kaur A."/>
            <person name="Locke D.P."/>
            <person name="Madan A."/>
            <person name="Munson G."/>
            <person name="Jaffe D.B."/>
            <person name="Lui A."/>
            <person name="Macdonald P."/>
            <person name="Mauceli E."/>
            <person name="Naylor J.W."/>
            <person name="Nesbitt R."/>
            <person name="Nicol R."/>
            <person name="O'Leary S.B."/>
            <person name="Ratcliffe A."/>
            <person name="Rounsley S."/>
            <person name="She X."/>
            <person name="Sneddon K.M.B."/>
            <person name="Stewart S."/>
            <person name="Sougnez C."/>
            <person name="Stone S.M."/>
            <person name="Topham K."/>
            <person name="Vincent D."/>
            <person name="Wang S."/>
            <person name="Zimmer A.R."/>
            <person name="Birren B.W."/>
            <person name="Hood L."/>
            <person name="Lander E.S."/>
            <person name="Nusbaum C."/>
        </authorList>
    </citation>
    <scope>NUCLEOTIDE SEQUENCE [LARGE SCALE GENOMIC DNA]</scope>
</reference>
<reference key="8">
    <citation type="submission" date="2005-07" db="EMBL/GenBank/DDBJ databases">
        <authorList>
            <person name="Mural R.J."/>
            <person name="Istrail S."/>
            <person name="Sutton G.G."/>
            <person name="Florea L."/>
            <person name="Halpern A.L."/>
            <person name="Mobarry C.M."/>
            <person name="Lippert R."/>
            <person name="Walenz B."/>
            <person name="Shatkay H."/>
            <person name="Dew I."/>
            <person name="Miller J.R."/>
            <person name="Flanigan M.J."/>
            <person name="Edwards N.J."/>
            <person name="Bolanos R."/>
            <person name="Fasulo D."/>
            <person name="Halldorsson B.V."/>
            <person name="Hannenhalli S."/>
            <person name="Turner R."/>
            <person name="Yooseph S."/>
            <person name="Lu F."/>
            <person name="Nusskern D.R."/>
            <person name="Shue B.C."/>
            <person name="Zheng X.H."/>
            <person name="Zhong F."/>
            <person name="Delcher A.L."/>
            <person name="Huson D.H."/>
            <person name="Kravitz S.A."/>
            <person name="Mouchard L."/>
            <person name="Reinert K."/>
            <person name="Remington K.A."/>
            <person name="Clark A.G."/>
            <person name="Waterman M.S."/>
            <person name="Eichler E.E."/>
            <person name="Adams M.D."/>
            <person name="Hunkapiller M.W."/>
            <person name="Myers E.W."/>
            <person name="Venter J.C."/>
        </authorList>
    </citation>
    <scope>NUCLEOTIDE SEQUENCE [LARGE SCALE GENOMIC DNA]</scope>
</reference>
<reference key="9">
    <citation type="journal article" date="2004" name="Genome Res.">
        <title>The status, quality, and expansion of the NIH full-length cDNA project: the Mammalian Gene Collection (MGC).</title>
        <authorList>
            <consortium name="The MGC Project Team"/>
        </authorList>
    </citation>
    <scope>NUCLEOTIDE SEQUENCE [LARGE SCALE MRNA] (ISOFORMS 2; 3 AND 5)</scope>
    <scope>NUCLEOTIDE SEQUENCE [LARGE SCALE MRNA] OF 50-441 (ISOFORM 4)</scope>
    <source>
        <tissue>Cervix</tissue>
        <tissue>Lung</tissue>
        <tissue>Lymph</tissue>
        <tissue>Placenta</tissue>
    </source>
</reference>
<reference key="10">
    <citation type="submission" date="1999-12" db="EMBL/GenBank/DDBJ databases">
        <title>A novel gene expressed in human bone marrow.</title>
        <authorList>
            <person name="Zhao M."/>
            <person name="Gu J."/>
            <person name="Li N."/>
            <person name="Peng Y."/>
            <person name="Han Z."/>
            <person name="Chen Z."/>
        </authorList>
    </citation>
    <scope>NUCLEOTIDE SEQUENCE [LARGE SCALE MRNA] OF 1-207 (ISOFORMS 1/2)</scope>
    <source>
        <tissue>Bone marrow</tissue>
    </source>
</reference>
<reference key="11">
    <citation type="journal article" date="2003" name="J. Cell Biol.">
        <title>NuSAP, a novel microtubule-associated protein involved in mitotic spindle organization.</title>
        <authorList>
            <person name="Raemaekers T."/>
            <person name="Ribbeck K."/>
            <person name="Beaudouin J."/>
            <person name="Annaert W."/>
            <person name="Van Camp M."/>
            <person name="Stockmans I."/>
            <person name="Smets N."/>
            <person name="Bouillon R."/>
            <person name="Ellenberg J."/>
            <person name="Carmeliet G."/>
        </authorList>
    </citation>
    <scope>FUNCTION</scope>
</reference>
<reference key="12">
    <citation type="journal article" date="2007" name="Cell. Signal.">
        <title>NuSAP is degraded by APC/C-Cdh1 and its overexpression results in mitotic arrest dependent of its microtubules' affinity.</title>
        <authorList>
            <person name="Li L."/>
            <person name="Zhou Y."/>
            <person name="Sun L."/>
            <person name="Xing G."/>
            <person name="Tian C."/>
            <person name="Sun J."/>
            <person name="Zhang L."/>
            <person name="He F."/>
        </authorList>
    </citation>
    <scope>SUBCELLULAR LOCATION</scope>
    <scope>UBIQUITINATION</scope>
</reference>
<reference key="13">
    <citation type="journal article" date="2007" name="Curr. Biol.">
        <title>A role for NuSAP in linking microtubules to mitotic chromosomes.</title>
        <authorList>
            <person name="Ribbeck K."/>
            <person name="Raemaekers T."/>
            <person name="Carmeliet G."/>
            <person name="Mattaj I.W."/>
        </authorList>
    </citation>
    <scope>SUBCELLULAR LOCATION</scope>
    <scope>ASSOCIATION WITH CHROMATIN</scope>
</reference>
<reference key="14">
    <citation type="journal article" date="2008" name="Proc. Natl. Acad. Sci. U.S.A.">
        <title>A quantitative atlas of mitotic phosphorylation.</title>
        <authorList>
            <person name="Dephoure N."/>
            <person name="Zhou C."/>
            <person name="Villen J."/>
            <person name="Beausoleil S.A."/>
            <person name="Bakalarski C.E."/>
            <person name="Elledge S.J."/>
            <person name="Gygi S.P."/>
        </authorList>
    </citation>
    <scope>PHOSPHORYLATION [LARGE SCALE ANALYSIS] AT SER-135; THR-182; SER-240; THR-244; SER-247; THR-314 AND SER-352</scope>
    <scope>IDENTIFICATION BY MASS SPECTROMETRY [LARGE SCALE ANALYSIS]</scope>
    <source>
        <tissue>Cervix carcinoma</tissue>
    </source>
</reference>
<reference key="15">
    <citation type="journal article" date="2009" name="Anal. Chem.">
        <title>Lys-N and trypsin cover complementary parts of the phosphoproteome in a refined SCX-based approach.</title>
        <authorList>
            <person name="Gauci S."/>
            <person name="Helbig A.O."/>
            <person name="Slijper M."/>
            <person name="Krijgsveld J."/>
            <person name="Heck A.J."/>
            <person name="Mohammed S."/>
        </authorList>
    </citation>
    <scope>IDENTIFICATION BY MASS SPECTROMETRY [LARGE SCALE ANALYSIS]</scope>
</reference>
<reference key="16">
    <citation type="journal article" date="2009" name="Sci. Signal.">
        <title>Quantitative phosphoproteomic analysis of T cell receptor signaling reveals system-wide modulation of protein-protein interactions.</title>
        <authorList>
            <person name="Mayya V."/>
            <person name="Lundgren D.H."/>
            <person name="Hwang S.-I."/>
            <person name="Rezaul K."/>
            <person name="Wu L."/>
            <person name="Eng J.K."/>
            <person name="Rodionov V."/>
            <person name="Han D.K."/>
        </authorList>
    </citation>
    <scope>PHOSPHORYLATION [LARGE SCALE ANALYSIS] AT THR-338</scope>
    <scope>IDENTIFICATION BY MASS SPECTROMETRY [LARGE SCALE ANALYSIS]</scope>
    <source>
        <tissue>Leukemic T-cell</tissue>
    </source>
</reference>
<reference key="17">
    <citation type="journal article" date="2009" name="Science">
        <title>Lysine acetylation targets protein complexes and co-regulates major cellular functions.</title>
        <authorList>
            <person name="Choudhary C."/>
            <person name="Kumar C."/>
            <person name="Gnad F."/>
            <person name="Nielsen M.L."/>
            <person name="Rehman M."/>
            <person name="Walther T.C."/>
            <person name="Olsen J.V."/>
            <person name="Mann M."/>
        </authorList>
    </citation>
    <scope>ACETYLATION [LARGE SCALE ANALYSIS] AT LYS-411</scope>
    <scope>IDENTIFICATION BY MASS SPECTROMETRY [LARGE SCALE ANALYSIS]</scope>
</reference>
<reference key="18">
    <citation type="journal article" date="2010" name="Sci. Signal.">
        <title>Quantitative phosphoproteomics reveals widespread full phosphorylation site occupancy during mitosis.</title>
        <authorList>
            <person name="Olsen J.V."/>
            <person name="Vermeulen M."/>
            <person name="Santamaria A."/>
            <person name="Kumar C."/>
            <person name="Miller M.L."/>
            <person name="Jensen L.J."/>
            <person name="Gnad F."/>
            <person name="Cox J."/>
            <person name="Jensen T.S."/>
            <person name="Nigg E.A."/>
            <person name="Brunak S."/>
            <person name="Mann M."/>
        </authorList>
    </citation>
    <scope>PHOSPHORYLATION [LARGE SCALE ANALYSIS] AT SER-135; SER-240; SER-276; SER-311; THR-314 AND SER-352</scope>
    <scope>IDENTIFICATION BY MASS SPECTROMETRY [LARGE SCALE ANALYSIS]</scope>
    <source>
        <tissue>Cervix carcinoma</tissue>
    </source>
</reference>
<reference key="19">
    <citation type="journal article" date="2011" name="BMC Syst. Biol.">
        <title>Initial characterization of the human central proteome.</title>
        <authorList>
            <person name="Burkard T.R."/>
            <person name="Planyavsky M."/>
            <person name="Kaupe I."/>
            <person name="Breitwieser F.P."/>
            <person name="Buerckstuemmer T."/>
            <person name="Bennett K.L."/>
            <person name="Superti-Furga G."/>
            <person name="Colinge J."/>
        </authorList>
    </citation>
    <scope>IDENTIFICATION BY MASS SPECTROMETRY [LARGE SCALE ANALYSIS]</scope>
</reference>
<reference key="20">
    <citation type="journal article" date="2011" name="Biochem. Biophys. Res. Commun.">
        <title>ATM-mediated NuSAP phosphorylation induces mitotic arrest.</title>
        <authorList>
            <person name="Xie P."/>
            <person name="Li L."/>
            <person name="Xing G."/>
            <person name="Tian C."/>
            <person name="Yin Y."/>
            <person name="He F."/>
            <person name="Zhang L."/>
        </authorList>
    </citation>
    <scope>PHOSPHORYLATION AT SER-124 BY ATM</scope>
</reference>
<reference key="21">
    <citation type="journal article" date="2013" name="J. Proteome Res.">
        <title>Toward a comprehensive characterization of a human cancer cell phosphoproteome.</title>
        <authorList>
            <person name="Zhou H."/>
            <person name="Di Palma S."/>
            <person name="Preisinger C."/>
            <person name="Peng M."/>
            <person name="Polat A.N."/>
            <person name="Heck A.J."/>
            <person name="Mohammed S."/>
        </authorList>
    </citation>
    <scope>PHOSPHORYLATION [LARGE SCALE ANALYSIS] AT SER-135; THR-182; SER-240; THR-244; SER-247; SER-255; SER-269; THR-338; THR-349; SER-352 AND SER-363</scope>
    <scope>IDENTIFICATION BY MASS SPECTROMETRY [LARGE SCALE ANALYSIS]</scope>
    <source>
        <tissue>Cervix carcinoma</tissue>
        <tissue>Erythroleukemia</tissue>
    </source>
</reference>
<dbReference type="EMBL" id="AF290612">
    <property type="protein sequence ID" value="AAK28023.1"/>
    <property type="molecule type" value="mRNA"/>
</dbReference>
<dbReference type="EMBL" id="AF305711">
    <property type="protein sequence ID" value="AAG25874.1"/>
    <property type="molecule type" value="mRNA"/>
</dbReference>
<dbReference type="EMBL" id="AF090915">
    <property type="protein sequence ID" value="AAF24034.1"/>
    <property type="status" value="ALT_FRAME"/>
    <property type="molecule type" value="mRNA"/>
</dbReference>
<dbReference type="EMBL" id="AK023483">
    <property type="protein sequence ID" value="BAB14586.1"/>
    <property type="molecule type" value="mRNA"/>
</dbReference>
<dbReference type="EMBL" id="AK293168">
    <property type="protein sequence ID" value="BAG56712.1"/>
    <property type="molecule type" value="mRNA"/>
</dbReference>
<dbReference type="EMBL" id="AK222819">
    <property type="protein sequence ID" value="BAD96539.1"/>
    <property type="molecule type" value="mRNA"/>
</dbReference>
<dbReference type="EMBL" id="AL833611">
    <property type="status" value="NOT_ANNOTATED_CDS"/>
    <property type="molecule type" value="mRNA"/>
</dbReference>
<dbReference type="EMBL" id="AC087721">
    <property type="status" value="NOT_ANNOTATED_CDS"/>
    <property type="molecule type" value="Genomic_DNA"/>
</dbReference>
<dbReference type="EMBL" id="CH471125">
    <property type="protein sequence ID" value="EAW92483.1"/>
    <property type="molecule type" value="Genomic_DNA"/>
</dbReference>
<dbReference type="EMBL" id="CH471125">
    <property type="protein sequence ID" value="EAW92486.1"/>
    <property type="molecule type" value="Genomic_DNA"/>
</dbReference>
<dbReference type="EMBL" id="BC001308">
    <property type="protein sequence ID" value="AAH01308.1"/>
    <property type="molecule type" value="mRNA"/>
</dbReference>
<dbReference type="EMBL" id="BC010838">
    <property type="protein sequence ID" value="AAH10838.2"/>
    <property type="molecule type" value="mRNA"/>
</dbReference>
<dbReference type="EMBL" id="BC012887">
    <property type="protein sequence ID" value="AAH12887.2"/>
    <property type="status" value="ALT_INIT"/>
    <property type="molecule type" value="mRNA"/>
</dbReference>
<dbReference type="EMBL" id="BC024772">
    <property type="protein sequence ID" value="AAH24772.1"/>
    <property type="molecule type" value="mRNA"/>
</dbReference>
<dbReference type="EMBL" id="AF217513">
    <property type="protein sequence ID" value="AAF67624.1"/>
    <property type="status" value="ALT_FRAME"/>
    <property type="molecule type" value="mRNA"/>
</dbReference>
<dbReference type="CCDS" id="CCDS45234.1">
    <molecule id="Q9BXS6-1"/>
</dbReference>
<dbReference type="CCDS" id="CCDS45236.1">
    <molecule id="Q9BXS6-2"/>
</dbReference>
<dbReference type="CCDS" id="CCDS58356.1">
    <molecule id="Q9BXS6-3"/>
</dbReference>
<dbReference type="CCDS" id="CCDS58357.1">
    <molecule id="Q9BXS6-6"/>
</dbReference>
<dbReference type="CCDS" id="CCDS58358.1">
    <molecule id="Q9BXS6-7"/>
</dbReference>
<dbReference type="CCDS" id="CCDS73708.1">
    <molecule id="Q9BXS6-5"/>
</dbReference>
<dbReference type="RefSeq" id="NP_001230071.1">
    <molecule id="Q9BXS6-3"/>
    <property type="nucleotide sequence ID" value="NM_001243142.2"/>
</dbReference>
<dbReference type="RefSeq" id="NP_001230072.1">
    <molecule id="Q9BXS6-6"/>
    <property type="nucleotide sequence ID" value="NM_001243143.2"/>
</dbReference>
<dbReference type="RefSeq" id="NP_001230073.1">
    <molecule id="Q9BXS6-7"/>
    <property type="nucleotide sequence ID" value="NM_001243144.2"/>
</dbReference>
<dbReference type="RefSeq" id="NP_001288065.1">
    <molecule id="Q9BXS6-5"/>
    <property type="nucleotide sequence ID" value="NM_001301136.2"/>
</dbReference>
<dbReference type="RefSeq" id="NP_057443.2">
    <molecule id="Q9BXS6-1"/>
    <property type="nucleotide sequence ID" value="NM_016359.5"/>
</dbReference>
<dbReference type="RefSeq" id="NP_060924.4">
    <molecule id="Q9BXS6-2"/>
    <property type="nucleotide sequence ID" value="NM_018454.7"/>
</dbReference>
<dbReference type="RefSeq" id="XP_005254487.1">
    <molecule id="Q9BXS6-4"/>
    <property type="nucleotide sequence ID" value="XM_005254430.6"/>
</dbReference>
<dbReference type="RefSeq" id="XP_054234125.1">
    <molecule id="Q9BXS6-4"/>
    <property type="nucleotide sequence ID" value="XM_054378150.1"/>
</dbReference>
<dbReference type="SMR" id="Q9BXS6"/>
<dbReference type="BioGRID" id="119376">
    <property type="interactions" value="128"/>
</dbReference>
<dbReference type="FunCoup" id="Q9BXS6">
    <property type="interactions" value="839"/>
</dbReference>
<dbReference type="IntAct" id="Q9BXS6">
    <property type="interactions" value="43"/>
</dbReference>
<dbReference type="MINT" id="Q9BXS6"/>
<dbReference type="STRING" id="9606.ENSP00000499238"/>
<dbReference type="CarbonylDB" id="Q9BXS6"/>
<dbReference type="GlyGen" id="Q9BXS6">
    <property type="glycosylation" value="4 sites, 1 O-linked glycan (4 sites)"/>
</dbReference>
<dbReference type="iPTMnet" id="Q9BXS6"/>
<dbReference type="PhosphoSitePlus" id="Q9BXS6"/>
<dbReference type="BioMuta" id="NUSAP1"/>
<dbReference type="DMDM" id="74717631"/>
<dbReference type="jPOST" id="Q9BXS6"/>
<dbReference type="MassIVE" id="Q9BXS6"/>
<dbReference type="PaxDb" id="9606-ENSP00000453403"/>
<dbReference type="PeptideAtlas" id="Q9BXS6"/>
<dbReference type="ProteomicsDB" id="17837"/>
<dbReference type="ProteomicsDB" id="79494">
    <molecule id="Q9BXS6-1"/>
</dbReference>
<dbReference type="ProteomicsDB" id="79495">
    <molecule id="Q9BXS6-2"/>
</dbReference>
<dbReference type="ProteomicsDB" id="79496">
    <molecule id="Q9BXS6-3"/>
</dbReference>
<dbReference type="ProteomicsDB" id="79497">
    <molecule id="Q9BXS6-4"/>
</dbReference>
<dbReference type="ProteomicsDB" id="79498">
    <molecule id="Q9BXS6-5"/>
</dbReference>
<dbReference type="Pumba" id="Q9BXS6"/>
<dbReference type="Antibodypedia" id="23266">
    <property type="antibodies" value="238 antibodies from 28 providers"/>
</dbReference>
<dbReference type="DNASU" id="51203"/>
<dbReference type="Ensembl" id="ENST00000260359.10">
    <molecule id="Q9BXS6-6"/>
    <property type="protein sequence ID" value="ENSP00000260359.6"/>
    <property type="gene ID" value="ENSG00000137804.14"/>
</dbReference>
<dbReference type="Ensembl" id="ENST00000414849.6">
    <molecule id="Q9BXS6-2"/>
    <property type="protein sequence ID" value="ENSP00000400746.2"/>
    <property type="gene ID" value="ENSG00000137804.14"/>
</dbReference>
<dbReference type="Ensembl" id="ENST00000450592.6">
    <molecule id="Q9BXS6-7"/>
    <property type="protein sequence ID" value="ENSP00000401014.2"/>
    <property type="gene ID" value="ENSG00000137804.14"/>
</dbReference>
<dbReference type="Ensembl" id="ENST00000559596.6">
    <molecule id="Q9BXS6-1"/>
    <property type="protein sequence ID" value="ENSP00000453403.1"/>
    <property type="gene ID" value="ENSG00000137804.14"/>
</dbReference>
<dbReference type="Ensembl" id="ENST00000560177.5">
    <molecule id="Q9BXS6-5"/>
    <property type="protein sequence ID" value="ENSP00000453657.1"/>
    <property type="gene ID" value="ENSG00000137804.14"/>
</dbReference>
<dbReference type="Ensembl" id="ENST00000560747.5">
    <molecule id="Q9BXS6-3"/>
    <property type="protein sequence ID" value="ENSP00000454097.1"/>
    <property type="gene ID" value="ENSG00000137804.14"/>
</dbReference>
<dbReference type="Ensembl" id="ENST00000668273.1">
    <molecule id="Q9BXS6-1"/>
    <property type="protein sequence ID" value="ENSP00000499238.1"/>
    <property type="gene ID" value="ENSG00000137804.14"/>
</dbReference>
<dbReference type="GeneID" id="51203"/>
<dbReference type="KEGG" id="hsa:51203"/>
<dbReference type="MANE-Select" id="ENST00000559596.6">
    <property type="protein sequence ID" value="ENSP00000453403.1"/>
    <property type="RefSeq nucleotide sequence ID" value="NM_016359.5"/>
    <property type="RefSeq protein sequence ID" value="NP_057443.2"/>
</dbReference>
<dbReference type="UCSC" id="uc001znr.5">
    <molecule id="Q9BXS6-1"/>
    <property type="organism name" value="human"/>
</dbReference>
<dbReference type="AGR" id="HGNC:18538"/>
<dbReference type="CTD" id="51203"/>
<dbReference type="DisGeNET" id="51203"/>
<dbReference type="GeneCards" id="NUSAP1"/>
<dbReference type="HGNC" id="HGNC:18538">
    <property type="gene designation" value="NUSAP1"/>
</dbReference>
<dbReference type="HPA" id="ENSG00000137804">
    <property type="expression patterns" value="Group enriched (bone marrow, lymphoid tissue)"/>
</dbReference>
<dbReference type="MIM" id="612818">
    <property type="type" value="gene"/>
</dbReference>
<dbReference type="neXtProt" id="NX_Q9BXS6"/>
<dbReference type="OpenTargets" id="ENSG00000137804"/>
<dbReference type="PharmGKB" id="PA134987502"/>
<dbReference type="VEuPathDB" id="HostDB:ENSG00000137804"/>
<dbReference type="eggNOG" id="ENOG502QVI7">
    <property type="taxonomic scope" value="Eukaryota"/>
</dbReference>
<dbReference type="GeneTree" id="ENSGT00390000006370"/>
<dbReference type="HOGENOM" id="CLU_050701_0_0_1"/>
<dbReference type="InParanoid" id="Q9BXS6"/>
<dbReference type="OMA" id="PHVTMSG"/>
<dbReference type="OrthoDB" id="3258416at2759"/>
<dbReference type="PAN-GO" id="Q9BXS6">
    <property type="GO annotations" value="6 GO annotations based on evolutionary models"/>
</dbReference>
<dbReference type="PhylomeDB" id="Q9BXS6"/>
<dbReference type="TreeFam" id="TF329459"/>
<dbReference type="PathwayCommons" id="Q9BXS6"/>
<dbReference type="SignaLink" id="Q9BXS6"/>
<dbReference type="SIGNOR" id="Q9BXS6"/>
<dbReference type="BioGRID-ORCS" id="51203">
    <property type="hits" value="10 hits in 1171 CRISPR screens"/>
</dbReference>
<dbReference type="CD-CODE" id="91857CE7">
    <property type="entry name" value="Nucleolus"/>
</dbReference>
<dbReference type="CD-CODE" id="D6A53B8E">
    <property type="entry name" value="Nuclear pore complex"/>
</dbReference>
<dbReference type="ChiTaRS" id="NUSAP1">
    <property type="organism name" value="human"/>
</dbReference>
<dbReference type="GenomeRNAi" id="51203"/>
<dbReference type="Pharos" id="Q9BXS6">
    <property type="development level" value="Tbio"/>
</dbReference>
<dbReference type="PRO" id="PR:Q9BXS6"/>
<dbReference type="Proteomes" id="UP000005640">
    <property type="component" value="Chromosome 15"/>
</dbReference>
<dbReference type="RNAct" id="Q9BXS6">
    <property type="molecule type" value="protein"/>
</dbReference>
<dbReference type="Bgee" id="ENSG00000137804">
    <property type="expression patterns" value="Expressed in ventricular zone and 103 other cell types or tissues"/>
</dbReference>
<dbReference type="ExpressionAtlas" id="Q9BXS6">
    <property type="expression patterns" value="baseline and differential"/>
</dbReference>
<dbReference type="GO" id="GO:0005694">
    <property type="term" value="C:chromosome"/>
    <property type="evidence" value="ECO:0007669"/>
    <property type="project" value="UniProtKB-SubCell"/>
</dbReference>
<dbReference type="GO" id="GO:0005737">
    <property type="term" value="C:cytoplasm"/>
    <property type="evidence" value="ECO:0007669"/>
    <property type="project" value="UniProtKB-SubCell"/>
</dbReference>
<dbReference type="GO" id="GO:0005874">
    <property type="term" value="C:microtubule"/>
    <property type="evidence" value="ECO:0007669"/>
    <property type="project" value="UniProtKB-KW"/>
</dbReference>
<dbReference type="GO" id="GO:0072686">
    <property type="term" value="C:mitotic spindle"/>
    <property type="evidence" value="ECO:0000318"/>
    <property type="project" value="GO_Central"/>
</dbReference>
<dbReference type="GO" id="GO:0005730">
    <property type="term" value="C:nucleolus"/>
    <property type="evidence" value="ECO:0000318"/>
    <property type="project" value="GO_Central"/>
</dbReference>
<dbReference type="GO" id="GO:0003677">
    <property type="term" value="F:DNA binding"/>
    <property type="evidence" value="ECO:0007669"/>
    <property type="project" value="UniProtKB-KW"/>
</dbReference>
<dbReference type="GO" id="GO:0008017">
    <property type="term" value="F:microtubule binding"/>
    <property type="evidence" value="ECO:0000318"/>
    <property type="project" value="GO_Central"/>
</dbReference>
<dbReference type="GO" id="GO:0003723">
    <property type="term" value="F:RNA binding"/>
    <property type="evidence" value="ECO:0007005"/>
    <property type="project" value="UniProtKB"/>
</dbReference>
<dbReference type="GO" id="GO:0040001">
    <property type="term" value="P:establishment of mitotic spindle localization"/>
    <property type="evidence" value="ECO:0000314"/>
    <property type="project" value="MGI"/>
</dbReference>
<dbReference type="GO" id="GO:0007076">
    <property type="term" value="P:mitotic chromosome condensation"/>
    <property type="evidence" value="ECO:0000314"/>
    <property type="project" value="MGI"/>
</dbReference>
<dbReference type="GO" id="GO:0000281">
    <property type="term" value="P:mitotic cytokinesis"/>
    <property type="evidence" value="ECO:0000314"/>
    <property type="project" value="MGI"/>
</dbReference>
<dbReference type="GO" id="GO:0000070">
    <property type="term" value="P:mitotic sister chromatid segregation"/>
    <property type="evidence" value="ECO:0000314"/>
    <property type="project" value="MGI"/>
</dbReference>
<dbReference type="GO" id="GO:0045840">
    <property type="term" value="P:positive regulation of mitotic nuclear division"/>
    <property type="evidence" value="ECO:0000314"/>
    <property type="project" value="MGI"/>
</dbReference>
<dbReference type="InterPro" id="IPR026756">
    <property type="entry name" value="NuSAP"/>
</dbReference>
<dbReference type="PANTHER" id="PTHR15874">
    <property type="entry name" value="NUCLEOLAR AND SPINDLE-ASSOCIATED PROTEIN 1"/>
    <property type="match status" value="1"/>
</dbReference>
<dbReference type="PANTHER" id="PTHR15874:SF1">
    <property type="entry name" value="NUCLEOLAR AND SPINDLE-ASSOCIATED PROTEIN 1"/>
    <property type="match status" value="1"/>
</dbReference>
<dbReference type="Pfam" id="PF16006">
    <property type="entry name" value="NUSAP"/>
    <property type="match status" value="1"/>
</dbReference>
<gene>
    <name type="primary">NUSAP1</name>
    <name type="synonym">ANKT</name>
    <name type="ORF">BM-037</name>
    <name type="ORF">PRO0310</name>
</gene>
<proteinExistence type="evidence at protein level"/>
<feature type="chain" id="PRO_0000302034" description="Nucleolar and spindle-associated protein 1">
    <location>
        <begin position="1"/>
        <end position="441"/>
    </location>
</feature>
<feature type="region of interest" description="Disordered" evidence="3">
    <location>
        <begin position="47"/>
        <end position="186"/>
    </location>
</feature>
<feature type="region of interest" description="Disordered" evidence="3">
    <location>
        <begin position="216"/>
        <end position="267"/>
    </location>
</feature>
<feature type="region of interest" description="Interaction with microtubules" evidence="1">
    <location>
        <begin position="237"/>
        <end position="382"/>
    </location>
</feature>
<feature type="region of interest" description="Disordered" evidence="3">
    <location>
        <begin position="286"/>
        <end position="319"/>
    </location>
</feature>
<feature type="region of interest" description="Disordered" evidence="3">
    <location>
        <begin position="401"/>
        <end position="427"/>
    </location>
</feature>
<feature type="coiled-coil region" evidence="2">
    <location>
        <begin position="407"/>
        <end position="432"/>
    </location>
</feature>
<feature type="short sequence motif" description="KEN box">
    <location>
        <begin position="384"/>
        <end position="390"/>
    </location>
</feature>
<feature type="compositionally biased region" description="Polar residues" evidence="3">
    <location>
        <begin position="56"/>
        <end position="74"/>
    </location>
</feature>
<feature type="compositionally biased region" description="Polar residues" evidence="3">
    <location>
        <begin position="100"/>
        <end position="116"/>
    </location>
</feature>
<feature type="compositionally biased region" description="Basic and acidic residues" evidence="3">
    <location>
        <begin position="117"/>
        <end position="126"/>
    </location>
</feature>
<feature type="compositionally biased region" description="Basic and acidic residues" evidence="3">
    <location>
        <begin position="152"/>
        <end position="171"/>
    </location>
</feature>
<feature type="compositionally biased region" description="Polar residues" evidence="3">
    <location>
        <begin position="241"/>
        <end position="264"/>
    </location>
</feature>
<feature type="compositionally biased region" description="Basic and acidic residues" evidence="3">
    <location>
        <begin position="409"/>
        <end position="424"/>
    </location>
</feature>
<feature type="modified residue" description="Phosphoserine; by ATM" evidence="7">
    <location>
        <position position="124"/>
    </location>
</feature>
<feature type="modified residue" description="Phosphoserine" evidence="14 17 18">
    <location>
        <position position="135"/>
    </location>
</feature>
<feature type="modified residue" description="Phosphothreonine" evidence="14 18">
    <location>
        <position position="182"/>
    </location>
</feature>
<feature type="modified residue" description="Phosphoserine" evidence="14 17 18">
    <location>
        <position position="240"/>
    </location>
</feature>
<feature type="modified residue" description="Phosphothreonine" evidence="14 18">
    <location>
        <position position="244"/>
    </location>
</feature>
<feature type="modified residue" description="Phosphoserine" evidence="14 18">
    <location>
        <position position="247"/>
    </location>
</feature>
<feature type="modified residue" description="Phosphoserine" evidence="18">
    <location>
        <position position="255"/>
    </location>
</feature>
<feature type="modified residue" description="Phosphoserine" evidence="18">
    <location>
        <position position="269"/>
    </location>
</feature>
<feature type="modified residue" description="Phosphoserine" evidence="17">
    <location>
        <position position="276"/>
    </location>
</feature>
<feature type="modified residue" description="Phosphoserine" evidence="17">
    <location>
        <position position="311"/>
    </location>
</feature>
<feature type="modified residue" description="Phosphothreonine" evidence="14 17">
    <location>
        <position position="314"/>
    </location>
</feature>
<feature type="modified residue" description="Phosphothreonine" evidence="16 18">
    <location>
        <position position="338"/>
    </location>
</feature>
<feature type="modified residue" description="Phosphothreonine" evidence="18">
    <location>
        <position position="349"/>
    </location>
</feature>
<feature type="modified residue" description="Phosphoserine" evidence="14 17 18">
    <location>
        <position position="352"/>
    </location>
</feature>
<feature type="modified residue" description="Phosphoserine" evidence="18">
    <location>
        <position position="363"/>
    </location>
</feature>
<feature type="modified residue" description="N6-acetyllysine" evidence="15">
    <location>
        <position position="411"/>
    </location>
</feature>
<feature type="splice variant" id="VSP_046805" description="In isoform 7." evidence="8">
    <location>
        <begin position="32"/>
        <end position="54"/>
    </location>
</feature>
<feature type="splice variant" id="VSP_027910" description="In isoform 4 and isoform 6." evidence="9 10">
    <location>
        <begin position="102"/>
        <end position="116"/>
    </location>
</feature>
<feature type="splice variant" id="VSP_027911" description="In isoform 3 and isoform 5." evidence="9">
    <location>
        <position position="102"/>
    </location>
</feature>
<feature type="splice variant" id="VSP_027912" description="In isoform 2, isoform 3, isoform 4 and isoform 7." evidence="8 9 11 12">
    <location>
        <position position="221"/>
    </location>
</feature>
<feature type="splice variant" id="VSP_046806" description="In isoform 7." evidence="8">
    <location>
        <begin position="336"/>
        <end position="374"/>
    </location>
</feature>
<feature type="sequence variant" id="VAR_057779" description="In dbSNP:rs7178634.">
    <original>T</original>
    <variation>A</variation>
    <location>
        <position position="33"/>
    </location>
</feature>
<feature type="sequence variant" id="VAR_057780" description="In dbSNP:rs7178777.">
    <original>T</original>
    <variation>N</variation>
    <location>
        <position position="33"/>
    </location>
</feature>
<feature type="sequence conflict" description="In Ref. 6; AL833611." evidence="13" ref="6">
    <original>T</original>
    <variation>D</variation>
    <location>
        <position position="33"/>
    </location>
</feature>
<feature type="sequence conflict" description="In Ref. 5; BAD96539." evidence="13" ref="5">
    <original>I</original>
    <variation>V</variation>
    <location>
        <position position="43"/>
    </location>
</feature>
<feature type="sequence conflict" description="In Ref. 5; BAD96539." evidence="13" ref="5">
    <original>K</original>
    <variation>E</variation>
    <location>
        <position position="220"/>
    </location>
</feature>
<feature type="sequence conflict" description="In Ref. 4; BAG56712." evidence="13" ref="4">
    <original>G</original>
    <variation>V</variation>
    <location>
        <position position="331"/>
    </location>
</feature>
<feature type="sequence conflict" description="In Ref. 6; AL833611." evidence="13" ref="6">
    <original>D</original>
    <variation>DQ</variation>
    <location>
        <position position="441"/>
    </location>
</feature>
<accession>Q9BXS6</accession>
<accession>B4DDF1</accession>
<accession>E7ERR5</accession>
<accession>J3KN21</accession>
<accession>Q53GW2</accession>
<accession>Q8TBT4</accession>
<accession>Q96E58</accession>
<accession>Q96FJ1</accession>
<accession>Q9GZM9</accession>
<accession>Q9NZ85</accession>
<accession>Q9UI70</accession>
<name>NUSAP_HUMAN</name>
<sequence length="441" mass="49452">MIIPSLEELDSLKYSDLQNLAKSLGLRANLRATKLLKALKGYIKHEARKGNENQDESQTSASSCDETEIQISNQEEAERQPLGHVTKTRRRCKTVRVDPDSQQNHSEIKISNPTEFQNHEKQESQDLRATAKVPSPPDEHQEAENAVSSGNRDSKVPSEGKKSLYTDESSKPGKNKRTAITTPNFKKLHEAHFKEMESIDQYIERKKKHFEEHNSMNELKQQPINKGGVRTPVPPRGRLSVASTPISQRRSQGRSCGPASQSTLGLKGSLKRSAISAAKTGVRFSAATKDNEHKRSLTKTPARKSAHVTVSGGTPKGEAVLGTHKLKTITGNSAAVITPFKLTTEATQTPVSNKKPVFDLKASLSRPLNYEPHKGKLKPWGQSKENNYLNQHVNRINFYKKTYKQPHLQTKEEQRKKREQERKEKKAKVLGMRRGLILAED</sequence>
<evidence type="ECO:0000250" key="1"/>
<evidence type="ECO:0000255" key="2"/>
<evidence type="ECO:0000256" key="3">
    <source>
        <dbReference type="SAM" id="MobiDB-lite"/>
    </source>
</evidence>
<evidence type="ECO:0000269" key="4">
    <source>
    </source>
</evidence>
<evidence type="ECO:0000269" key="5">
    <source>
    </source>
</evidence>
<evidence type="ECO:0000269" key="6">
    <source>
    </source>
</evidence>
<evidence type="ECO:0000269" key="7">
    <source>
    </source>
</evidence>
<evidence type="ECO:0000303" key="8">
    <source>
    </source>
</evidence>
<evidence type="ECO:0000303" key="9">
    <source>
    </source>
</evidence>
<evidence type="ECO:0000303" key="10">
    <source>
    </source>
</evidence>
<evidence type="ECO:0000303" key="11">
    <source ref="2"/>
</evidence>
<evidence type="ECO:0000303" key="12">
    <source ref="5"/>
</evidence>
<evidence type="ECO:0000305" key="13"/>
<evidence type="ECO:0007744" key="14">
    <source>
    </source>
</evidence>
<evidence type="ECO:0007744" key="15">
    <source>
    </source>
</evidence>
<evidence type="ECO:0007744" key="16">
    <source>
    </source>
</evidence>
<evidence type="ECO:0007744" key="17">
    <source>
    </source>
</evidence>
<evidence type="ECO:0007744" key="18">
    <source>
    </source>
</evidence>
<keyword id="KW-0007">Acetylation</keyword>
<keyword id="KW-0025">Alternative splicing</keyword>
<keyword id="KW-0131">Cell cycle</keyword>
<keyword id="KW-0132">Cell division</keyword>
<keyword id="KW-0158">Chromosome</keyword>
<keyword id="KW-0175">Coiled coil</keyword>
<keyword id="KW-0963">Cytoplasm</keyword>
<keyword id="KW-0206">Cytoskeleton</keyword>
<keyword id="KW-0238">DNA-binding</keyword>
<keyword id="KW-0493">Microtubule</keyword>
<keyword id="KW-0498">Mitosis</keyword>
<keyword id="KW-0539">Nucleus</keyword>
<keyword id="KW-0597">Phosphoprotein</keyword>
<keyword id="KW-1267">Proteomics identification</keyword>
<keyword id="KW-1185">Reference proteome</keyword>
<keyword id="KW-0832">Ubl conjugation</keyword>
<comment type="function">
    <text evidence="1 4">Microtubule-associated protein with the capacity to bundle and stabilize microtubules (By similarity). May associate with chromosomes and promote the organization of mitotic spindle microtubules around them.</text>
</comment>
<comment type="subunit">
    <text evidence="1">Interacts with DNA and microtubules. Microtubule bundling is inhibited by IPO7, KPNA2 and KPNB1 while association with DNA is also inhibited by IPO7 and KPNA2 (By similarity).</text>
</comment>
<comment type="interaction">
    <interactant intactId="EBI-2555618">
        <id>Q9BXS6</id>
    </interactant>
    <interactant intactId="EBI-352622">
        <id>P07355</id>
        <label>ANXA2</label>
    </interactant>
    <organismsDiffer>false</organismsDiffer>
    <experiments>5</experiments>
</comment>
<comment type="interaction">
    <interactant intactId="EBI-2555618">
        <id>Q9BXS6</id>
    </interactant>
    <interactant intactId="EBI-739624">
        <id>Q8NHQ1</id>
        <label>CEP70</label>
    </interactant>
    <organismsDiffer>false</organismsDiffer>
    <experiments>3</experiments>
</comment>
<comment type="subcellular location">
    <subcellularLocation>
        <location evidence="1">Cytoplasm</location>
    </subcellularLocation>
    <subcellularLocation>
        <location evidence="1">Nucleus</location>
        <location evidence="1">Nucleolus</location>
    </subcellularLocation>
    <subcellularLocation>
        <location evidence="1">Cytoplasm</location>
        <location evidence="1">Cytoskeleton</location>
        <location evidence="1">Spindle</location>
    </subcellularLocation>
    <subcellularLocation>
        <location evidence="1">Chromosome</location>
    </subcellularLocation>
    <text evidence="1 5 6">Found in the cytoplasm and nucleolus during interphase and redistributes to the mitotic spindle in prometaphase (By similarity). Localizes to the mitotic spindle during anaphase and telophase then disappears from around the chromosomes during cytokinesis (By similarity). Localizes to multiple distinct regions of chromosomes throughout mitosis.</text>
</comment>
<comment type="alternative products">
    <event type="alternative splicing"/>
    <isoform>
        <id>Q9BXS6-1</id>
        <name>1</name>
        <sequence type="displayed"/>
    </isoform>
    <isoform>
        <id>Q9BXS6-2</id>
        <name>2</name>
        <sequence type="described" ref="VSP_027912"/>
    </isoform>
    <isoform>
        <id>Q9BXS6-3</id>
        <name>3</name>
        <sequence type="described" ref="VSP_027911 VSP_027912"/>
    </isoform>
    <isoform>
        <id>Q9BXS6-4</id>
        <name>4</name>
        <sequence type="described" ref="VSP_027910 VSP_027912"/>
    </isoform>
    <isoform>
        <id>Q9BXS6-5</id>
        <name>5</name>
        <sequence type="described" ref="VSP_027911"/>
    </isoform>
    <isoform>
        <id>Q9BXS6-6</id>
        <name>6</name>
        <sequence type="described" ref="VSP_027910"/>
    </isoform>
    <isoform>
        <id>Q9BXS6-7</id>
        <name>7</name>
        <sequence type="described" ref="VSP_046805 VSP_027912 VSP_046806"/>
    </isoform>
</comment>
<comment type="domain">
    <text>The KEN box is required for the FZR1-dependent degradation of this protein subsequent to ubiquitination.</text>
</comment>
<comment type="PTM">
    <text evidence="6">Ubiquitinated. Ubiquitination by FZR1 may lead to proteasome-dependent degradation of this protein.</text>
</comment>
<comment type="PTM">
    <text evidence="7">Phosphorylation by ATM in G2/M-phase induces mitotic arrest.</text>
</comment>
<comment type="similarity">
    <text evidence="13">Belongs to the NUSAP family.</text>
</comment>
<comment type="sequence caution" evidence="13">
    <conflict type="frameshift">
        <sequence resource="EMBL-CDS" id="AAF24034"/>
    </conflict>
</comment>
<comment type="sequence caution" evidence="13">
    <conflict type="frameshift">
        <sequence resource="EMBL-CDS" id="AAF67624"/>
    </conflict>
</comment>
<comment type="sequence caution" evidence="13">
    <conflict type="erroneous initiation">
        <sequence resource="EMBL-CDS" id="AAH12887"/>
    </conflict>
</comment>
<organism>
    <name type="scientific">Homo sapiens</name>
    <name type="common">Human</name>
    <dbReference type="NCBI Taxonomy" id="9606"/>
    <lineage>
        <taxon>Eukaryota</taxon>
        <taxon>Metazoa</taxon>
        <taxon>Chordata</taxon>
        <taxon>Craniata</taxon>
        <taxon>Vertebrata</taxon>
        <taxon>Euteleostomi</taxon>
        <taxon>Mammalia</taxon>
        <taxon>Eutheria</taxon>
        <taxon>Euarchontoglires</taxon>
        <taxon>Primates</taxon>
        <taxon>Haplorrhini</taxon>
        <taxon>Catarrhini</taxon>
        <taxon>Hominidae</taxon>
        <taxon>Homo</taxon>
    </lineage>
</organism>